<sequence>MGVEIKGLTVPALLIKLDPSKSLQENIDELKQKLSSAFFKGSYAVVDYNGLELNEESKVEIEKVLKDFNASVLGFQNTKNNKESLKGVTQKKSLKIINKTLRSGQKVEYDGDVLILGDVNPDAYVVSSGSVIVMGNLRGVVHAGANGDETAVVMALKLRPQQIRISNYIARSPDEPDVKAEESNSPEIAYIENNAIVIDKIK</sequence>
<comment type="function">
    <text evidence="1">Cell division inhibitor that blocks the formation of polar Z ring septums. Rapidly oscillates between the poles of the cell to destabilize FtsZ filaments that have formed before they mature into polar Z rings. Prevents FtsZ polymerization.</text>
</comment>
<comment type="subunit">
    <text evidence="1">Interacts with MinD and FtsZ.</text>
</comment>
<comment type="similarity">
    <text evidence="1">Belongs to the MinC family.</text>
</comment>
<organism>
    <name type="scientific">Sulfurihydrogenibium sp. (strain YO3AOP1)</name>
    <dbReference type="NCBI Taxonomy" id="436114"/>
    <lineage>
        <taxon>Bacteria</taxon>
        <taxon>Pseudomonadati</taxon>
        <taxon>Aquificota</taxon>
        <taxon>Aquificia</taxon>
        <taxon>Aquificales</taxon>
        <taxon>Hydrogenothermaceae</taxon>
        <taxon>Sulfurihydrogenibium</taxon>
    </lineage>
</organism>
<protein>
    <recommendedName>
        <fullName evidence="1">Probable septum site-determining protein MinC</fullName>
    </recommendedName>
</protein>
<keyword id="KW-0131">Cell cycle</keyword>
<keyword id="KW-0132">Cell division</keyword>
<keyword id="KW-0717">Septation</keyword>
<accession>B2V8C0</accession>
<evidence type="ECO:0000255" key="1">
    <source>
        <dbReference type="HAMAP-Rule" id="MF_00267"/>
    </source>
</evidence>
<gene>
    <name evidence="1" type="primary">minC</name>
    <name type="ordered locus">SYO3AOP1_0553</name>
</gene>
<name>MINC_SULSY</name>
<dbReference type="EMBL" id="CP001080">
    <property type="protein sequence ID" value="ACD66193.1"/>
    <property type="molecule type" value="Genomic_DNA"/>
</dbReference>
<dbReference type="RefSeq" id="WP_012459274.1">
    <property type="nucleotide sequence ID" value="NC_010730.1"/>
</dbReference>
<dbReference type="SMR" id="B2V8C0"/>
<dbReference type="STRING" id="436114.SYO3AOP1_0553"/>
<dbReference type="KEGG" id="sul:SYO3AOP1_0553"/>
<dbReference type="eggNOG" id="COG0850">
    <property type="taxonomic scope" value="Bacteria"/>
</dbReference>
<dbReference type="HOGENOM" id="CLU_048711_2_0_0"/>
<dbReference type="GO" id="GO:0000902">
    <property type="term" value="P:cell morphogenesis"/>
    <property type="evidence" value="ECO:0007669"/>
    <property type="project" value="InterPro"/>
</dbReference>
<dbReference type="GO" id="GO:0000917">
    <property type="term" value="P:division septum assembly"/>
    <property type="evidence" value="ECO:0007669"/>
    <property type="project" value="UniProtKB-KW"/>
</dbReference>
<dbReference type="GO" id="GO:0051302">
    <property type="term" value="P:regulation of cell division"/>
    <property type="evidence" value="ECO:0007669"/>
    <property type="project" value="InterPro"/>
</dbReference>
<dbReference type="GO" id="GO:1901891">
    <property type="term" value="P:regulation of cell septum assembly"/>
    <property type="evidence" value="ECO:0007669"/>
    <property type="project" value="InterPro"/>
</dbReference>
<dbReference type="Gene3D" id="2.160.20.70">
    <property type="match status" value="1"/>
</dbReference>
<dbReference type="HAMAP" id="MF_00267">
    <property type="entry name" value="MinC"/>
    <property type="match status" value="1"/>
</dbReference>
<dbReference type="InterPro" id="IPR016098">
    <property type="entry name" value="CAP/MinC_C"/>
</dbReference>
<dbReference type="InterPro" id="IPR013033">
    <property type="entry name" value="MinC"/>
</dbReference>
<dbReference type="InterPro" id="IPR036145">
    <property type="entry name" value="MinC_C_sf"/>
</dbReference>
<dbReference type="InterPro" id="IPR007874">
    <property type="entry name" value="MinC_N"/>
</dbReference>
<dbReference type="InterPro" id="IPR005526">
    <property type="entry name" value="Septum_form_inhib_MinC_C"/>
</dbReference>
<dbReference type="NCBIfam" id="TIGR01222">
    <property type="entry name" value="minC"/>
    <property type="match status" value="1"/>
</dbReference>
<dbReference type="PANTHER" id="PTHR34108">
    <property type="entry name" value="SEPTUM SITE-DETERMINING PROTEIN MINC"/>
    <property type="match status" value="1"/>
</dbReference>
<dbReference type="PANTHER" id="PTHR34108:SF1">
    <property type="entry name" value="SEPTUM SITE-DETERMINING PROTEIN MINC"/>
    <property type="match status" value="1"/>
</dbReference>
<dbReference type="Pfam" id="PF03775">
    <property type="entry name" value="MinC_C"/>
    <property type="match status" value="1"/>
</dbReference>
<dbReference type="Pfam" id="PF05209">
    <property type="entry name" value="MinC_N"/>
    <property type="match status" value="1"/>
</dbReference>
<dbReference type="SUPFAM" id="SSF63848">
    <property type="entry name" value="Cell-division inhibitor MinC, C-terminal domain"/>
    <property type="match status" value="1"/>
</dbReference>
<proteinExistence type="inferred from homology"/>
<reference key="1">
    <citation type="journal article" date="2009" name="J. Bacteriol.">
        <title>Complete and draft genome sequences of six members of the Aquificales.</title>
        <authorList>
            <person name="Reysenbach A.-L."/>
            <person name="Hamamura N."/>
            <person name="Podar M."/>
            <person name="Griffiths E."/>
            <person name="Ferreira S."/>
            <person name="Hochstein R."/>
            <person name="Heidelberg J."/>
            <person name="Johnson J."/>
            <person name="Mead D."/>
            <person name="Pohorille A."/>
            <person name="Sarmiento M."/>
            <person name="Schweighofer K."/>
            <person name="Seshadri R."/>
            <person name="Voytek M.A."/>
        </authorList>
    </citation>
    <scope>NUCLEOTIDE SEQUENCE [LARGE SCALE GENOMIC DNA]</scope>
    <source>
        <strain>YO3AOP1</strain>
    </source>
</reference>
<feature type="chain" id="PRO_1000191258" description="Probable septum site-determining protein MinC">
    <location>
        <begin position="1"/>
        <end position="202"/>
    </location>
</feature>